<name>RL27_BURVG</name>
<reference key="1">
    <citation type="submission" date="2007-03" db="EMBL/GenBank/DDBJ databases">
        <title>Complete sequence of chromosome 1 of Burkholderia vietnamiensis G4.</title>
        <authorList>
            <consortium name="US DOE Joint Genome Institute"/>
            <person name="Copeland A."/>
            <person name="Lucas S."/>
            <person name="Lapidus A."/>
            <person name="Barry K."/>
            <person name="Detter J.C."/>
            <person name="Glavina del Rio T."/>
            <person name="Hammon N."/>
            <person name="Israni S."/>
            <person name="Dalin E."/>
            <person name="Tice H."/>
            <person name="Pitluck S."/>
            <person name="Chain P."/>
            <person name="Malfatti S."/>
            <person name="Shin M."/>
            <person name="Vergez L."/>
            <person name="Schmutz J."/>
            <person name="Larimer F."/>
            <person name="Land M."/>
            <person name="Hauser L."/>
            <person name="Kyrpides N."/>
            <person name="Tiedje J."/>
            <person name="Richardson P."/>
        </authorList>
    </citation>
    <scope>NUCLEOTIDE SEQUENCE [LARGE SCALE GENOMIC DNA]</scope>
    <source>
        <strain>G4 / LMG 22486</strain>
    </source>
</reference>
<comment type="similarity">
    <text evidence="1">Belongs to the bacterial ribosomal protein bL27 family.</text>
</comment>
<sequence length="87" mass="9089">MAHKKAGGSSRNGRDSESKRLGVKVYGGQAINAGGIIVRQRGTRMHAGENVGMGKDHTLFALVDGHVKFATKGADKKHLVIVVPAAA</sequence>
<organism>
    <name type="scientific">Burkholderia vietnamiensis (strain G4 / LMG 22486)</name>
    <name type="common">Burkholderia cepacia (strain R1808)</name>
    <dbReference type="NCBI Taxonomy" id="269482"/>
    <lineage>
        <taxon>Bacteria</taxon>
        <taxon>Pseudomonadati</taxon>
        <taxon>Pseudomonadota</taxon>
        <taxon>Betaproteobacteria</taxon>
        <taxon>Burkholderiales</taxon>
        <taxon>Burkholderiaceae</taxon>
        <taxon>Burkholderia</taxon>
        <taxon>Burkholderia cepacia complex</taxon>
    </lineage>
</organism>
<feature type="chain" id="PRO_1000017437" description="Large ribosomal subunit protein bL27">
    <location>
        <begin position="1"/>
        <end position="87"/>
    </location>
</feature>
<feature type="region of interest" description="Disordered" evidence="2">
    <location>
        <begin position="1"/>
        <end position="21"/>
    </location>
</feature>
<keyword id="KW-0687">Ribonucleoprotein</keyword>
<keyword id="KW-0689">Ribosomal protein</keyword>
<protein>
    <recommendedName>
        <fullName evidence="1">Large ribosomal subunit protein bL27</fullName>
    </recommendedName>
    <alternativeName>
        <fullName evidence="3">50S ribosomal protein L27</fullName>
    </alternativeName>
</protein>
<evidence type="ECO:0000255" key="1">
    <source>
        <dbReference type="HAMAP-Rule" id="MF_00539"/>
    </source>
</evidence>
<evidence type="ECO:0000256" key="2">
    <source>
        <dbReference type="SAM" id="MobiDB-lite"/>
    </source>
</evidence>
<evidence type="ECO:0000305" key="3"/>
<accession>A4JBB7</accession>
<proteinExistence type="inferred from homology"/>
<gene>
    <name evidence="1" type="primary">rpmA</name>
    <name type="ordered locus">Bcep1808_0558</name>
</gene>
<dbReference type="EMBL" id="CP000614">
    <property type="protein sequence ID" value="ABO53570.1"/>
    <property type="molecule type" value="Genomic_DNA"/>
</dbReference>
<dbReference type="SMR" id="A4JBB7"/>
<dbReference type="KEGG" id="bvi:Bcep1808_0558"/>
<dbReference type="eggNOG" id="COG0211">
    <property type="taxonomic scope" value="Bacteria"/>
</dbReference>
<dbReference type="HOGENOM" id="CLU_095424_4_1_4"/>
<dbReference type="Proteomes" id="UP000002287">
    <property type="component" value="Chromosome 1"/>
</dbReference>
<dbReference type="GO" id="GO:0022625">
    <property type="term" value="C:cytosolic large ribosomal subunit"/>
    <property type="evidence" value="ECO:0007669"/>
    <property type="project" value="TreeGrafter"/>
</dbReference>
<dbReference type="GO" id="GO:0003735">
    <property type="term" value="F:structural constituent of ribosome"/>
    <property type="evidence" value="ECO:0007669"/>
    <property type="project" value="InterPro"/>
</dbReference>
<dbReference type="GO" id="GO:0006412">
    <property type="term" value="P:translation"/>
    <property type="evidence" value="ECO:0007669"/>
    <property type="project" value="UniProtKB-UniRule"/>
</dbReference>
<dbReference type="FunFam" id="2.40.50.100:FF:000001">
    <property type="entry name" value="50S ribosomal protein L27"/>
    <property type="match status" value="1"/>
</dbReference>
<dbReference type="Gene3D" id="2.40.50.100">
    <property type="match status" value="1"/>
</dbReference>
<dbReference type="HAMAP" id="MF_00539">
    <property type="entry name" value="Ribosomal_bL27"/>
    <property type="match status" value="1"/>
</dbReference>
<dbReference type="InterPro" id="IPR001684">
    <property type="entry name" value="Ribosomal_bL27"/>
</dbReference>
<dbReference type="InterPro" id="IPR018261">
    <property type="entry name" value="Ribosomal_bL27_CS"/>
</dbReference>
<dbReference type="NCBIfam" id="TIGR00062">
    <property type="entry name" value="L27"/>
    <property type="match status" value="1"/>
</dbReference>
<dbReference type="PANTHER" id="PTHR15893:SF0">
    <property type="entry name" value="LARGE RIBOSOMAL SUBUNIT PROTEIN BL27M"/>
    <property type="match status" value="1"/>
</dbReference>
<dbReference type="PANTHER" id="PTHR15893">
    <property type="entry name" value="RIBOSOMAL PROTEIN L27"/>
    <property type="match status" value="1"/>
</dbReference>
<dbReference type="Pfam" id="PF01016">
    <property type="entry name" value="Ribosomal_L27"/>
    <property type="match status" value="1"/>
</dbReference>
<dbReference type="PRINTS" id="PR00063">
    <property type="entry name" value="RIBOSOMALL27"/>
</dbReference>
<dbReference type="SUPFAM" id="SSF110324">
    <property type="entry name" value="Ribosomal L27 protein-like"/>
    <property type="match status" value="1"/>
</dbReference>
<dbReference type="PROSITE" id="PS00831">
    <property type="entry name" value="RIBOSOMAL_L27"/>
    <property type="match status" value="1"/>
</dbReference>